<comment type="function">
    <text>Complexes with metalloproteinases (such as collagenases) and irreversibly inactivates them by binding to their catalytic zinc cofactor. May form part of a tissue-specific acute response to remodeling stimuli.</text>
</comment>
<comment type="subcellular location">
    <subcellularLocation>
        <location>Secreted</location>
        <location>Extracellular space</location>
        <location>Extracellular matrix</location>
    </subcellularLocation>
</comment>
<comment type="similarity">
    <text evidence="4">Belongs to the protease inhibitor I35 (TIMP) family.</text>
</comment>
<organism>
    <name type="scientific">Xenopus laevis</name>
    <name type="common">African clawed frog</name>
    <dbReference type="NCBI Taxonomy" id="8355"/>
    <lineage>
        <taxon>Eukaryota</taxon>
        <taxon>Metazoa</taxon>
        <taxon>Chordata</taxon>
        <taxon>Craniata</taxon>
        <taxon>Vertebrata</taxon>
        <taxon>Euteleostomi</taxon>
        <taxon>Amphibia</taxon>
        <taxon>Batrachia</taxon>
        <taxon>Anura</taxon>
        <taxon>Pipoidea</taxon>
        <taxon>Pipidae</taxon>
        <taxon>Xenopodinae</taxon>
        <taxon>Xenopus</taxon>
        <taxon>Xenopus</taxon>
    </lineage>
</organism>
<keyword id="KW-1015">Disulfide bond</keyword>
<keyword id="KW-0272">Extracellular matrix</keyword>
<keyword id="KW-0479">Metal-binding</keyword>
<keyword id="KW-0481">Metalloenzyme inhibitor</keyword>
<keyword id="KW-0483">Metalloprotease inhibitor</keyword>
<keyword id="KW-0646">Protease inhibitor</keyword>
<keyword id="KW-1185">Reference proteome</keyword>
<keyword id="KW-0964">Secreted</keyword>
<keyword id="KW-0732">Signal</keyword>
<keyword id="KW-0862">Zinc</keyword>
<sequence>MSVCALTLILGCFLLFLGDISKPAEGCTCAPSHPQDAFCNSDIVIRAKVVGKKLMKDGPFGTMRYTVKQMKMYRGFNKMPQVQYIYTEASESLCGVKLEVNKYQYLITGRVYEGKVYTGLCNLIERWEKLTFAQRKGLNHRYPLGCTCKIKPCYYLPCFITSKNECLWTDMLSNFGYPGYQSKNYACIKQKEGYCSWYRGWAPPDKTTINTTDP</sequence>
<accession>O73746</accession>
<accession>Q5D064</accession>
<reference key="1">
    <citation type="journal article" date="1998" name="Gene">
        <title>Cloning and developmental regulation of tissue inhibitor of metalloproteinases-3 (TIMP3) in Xenopus laevis early embryos.</title>
        <authorList>
            <person name="Yang M."/>
            <person name="Kurkinen M."/>
        </authorList>
    </citation>
    <scope>NUCLEOTIDE SEQUENCE [MRNA]</scope>
    <source>
        <tissue>Ovary</tissue>
    </source>
</reference>
<reference key="2">
    <citation type="submission" date="2003-10" db="EMBL/GenBank/DDBJ databases">
        <authorList>
            <consortium name="NIH - Xenopus Gene Collection (XGC) project"/>
        </authorList>
    </citation>
    <scope>NUCLEOTIDE SEQUENCE [LARGE SCALE MRNA]</scope>
    <source>
        <tissue>Lung</tissue>
    </source>
</reference>
<feature type="signal peptide" evidence="1">
    <location>
        <begin position="1"/>
        <end position="26"/>
    </location>
</feature>
<feature type="chain" id="PRO_0000034348" description="Metalloproteinase inhibitor 3">
    <location>
        <begin position="27"/>
        <end position="214"/>
    </location>
</feature>
<feature type="domain" description="NTR" evidence="3">
    <location>
        <begin position="27"/>
        <end position="146"/>
    </location>
</feature>
<feature type="region of interest" description="Involved in metalloproteinase-binding" evidence="2">
    <location>
        <begin position="27"/>
        <end position="30"/>
    </location>
</feature>
<feature type="region of interest" description="Involved in metalloproteinase-binding" evidence="2">
    <location>
        <begin position="91"/>
        <end position="92"/>
    </location>
</feature>
<feature type="binding site" evidence="2">
    <location>
        <position position="27"/>
    </location>
    <ligand>
        <name>Zn(2+)</name>
        <dbReference type="ChEBI" id="CHEBI:29105"/>
        <note>ligand shared with metalloproteinase partner</note>
    </ligand>
</feature>
<feature type="site" description="Involved in metalloproteinase-binding" evidence="2">
    <location>
        <position position="40"/>
    </location>
</feature>
<feature type="disulfide bond" evidence="3">
    <location>
        <begin position="27"/>
        <end position="94"/>
    </location>
</feature>
<feature type="disulfide bond" evidence="3">
    <location>
        <begin position="29"/>
        <end position="121"/>
    </location>
</feature>
<feature type="disulfide bond" evidence="3">
    <location>
        <begin position="39"/>
        <end position="146"/>
    </location>
</feature>
<feature type="disulfide bond" evidence="3">
    <location>
        <begin position="148"/>
        <end position="195"/>
    </location>
</feature>
<feature type="disulfide bond" evidence="3">
    <location>
        <begin position="153"/>
        <end position="158"/>
    </location>
</feature>
<feature type="disulfide bond" evidence="3">
    <location>
        <begin position="166"/>
        <end position="187"/>
    </location>
</feature>
<proteinExistence type="evidence at transcript level"/>
<protein>
    <recommendedName>
        <fullName>Metalloproteinase inhibitor 3</fullName>
    </recommendedName>
    <alternativeName>
        <fullName>Tissue inhibitor of metalloproteinases 3</fullName>
        <shortName>TIMP-3</shortName>
    </alternativeName>
</protein>
<name>TIMP3_XENLA</name>
<dbReference type="EMBL" id="AF042493">
    <property type="protein sequence ID" value="AAC41286.1"/>
    <property type="molecule type" value="mRNA"/>
</dbReference>
<dbReference type="EMBL" id="BC060423">
    <property type="protein sequence ID" value="AAH60423.1"/>
    <property type="molecule type" value="mRNA"/>
</dbReference>
<dbReference type="RefSeq" id="NP_001079064.1">
    <property type="nucleotide sequence ID" value="NM_001085595.1"/>
</dbReference>
<dbReference type="SMR" id="O73746"/>
<dbReference type="MEROPS" id="I35.003"/>
<dbReference type="DNASU" id="373596"/>
<dbReference type="AGR" id="Xenbase:XB-GENE-864869"/>
<dbReference type="Xenbase" id="XB-GENE-864869">
    <property type="gene designation" value="timp3.L"/>
</dbReference>
<dbReference type="OrthoDB" id="6041373at2759"/>
<dbReference type="Proteomes" id="UP000186698">
    <property type="component" value="Unplaced"/>
</dbReference>
<dbReference type="Bgee" id="373596">
    <property type="expression patterns" value="Expressed in brain and 19 other cell types or tissues"/>
</dbReference>
<dbReference type="GO" id="GO:0031012">
    <property type="term" value="C:extracellular matrix"/>
    <property type="evidence" value="ECO:0000318"/>
    <property type="project" value="GO_Central"/>
</dbReference>
<dbReference type="GO" id="GO:0005615">
    <property type="term" value="C:extracellular space"/>
    <property type="evidence" value="ECO:0000318"/>
    <property type="project" value="GO_Central"/>
</dbReference>
<dbReference type="GO" id="GO:0008191">
    <property type="term" value="F:metalloendopeptidase inhibitor activity"/>
    <property type="evidence" value="ECO:0000318"/>
    <property type="project" value="GO_Central"/>
</dbReference>
<dbReference type="GO" id="GO:0002020">
    <property type="term" value="F:protease binding"/>
    <property type="evidence" value="ECO:0007669"/>
    <property type="project" value="TreeGrafter"/>
</dbReference>
<dbReference type="GO" id="GO:0008270">
    <property type="term" value="F:zinc ion binding"/>
    <property type="evidence" value="ECO:0000250"/>
    <property type="project" value="UniProtKB"/>
</dbReference>
<dbReference type="GO" id="GO:0051045">
    <property type="term" value="P:negative regulation of membrane protein ectodomain proteolysis"/>
    <property type="evidence" value="ECO:0000318"/>
    <property type="project" value="GO_Central"/>
</dbReference>
<dbReference type="GO" id="GO:0034097">
    <property type="term" value="P:response to cytokine"/>
    <property type="evidence" value="ECO:0000318"/>
    <property type="project" value="GO_Central"/>
</dbReference>
<dbReference type="GO" id="GO:0009725">
    <property type="term" value="P:response to hormone"/>
    <property type="evidence" value="ECO:0000318"/>
    <property type="project" value="GO_Central"/>
</dbReference>
<dbReference type="CDD" id="cd03585">
    <property type="entry name" value="NTR_TIMP"/>
    <property type="match status" value="1"/>
</dbReference>
<dbReference type="FunFam" id="3.90.370.10:FF:000001">
    <property type="entry name" value="Metalloproteinase inhibitor 3"/>
    <property type="match status" value="1"/>
</dbReference>
<dbReference type="FunFam" id="2.40.50.120:FF:000005">
    <property type="entry name" value="Metalloproteinase inhibitor 3 precursor"/>
    <property type="match status" value="1"/>
</dbReference>
<dbReference type="Gene3D" id="2.40.50.120">
    <property type="match status" value="1"/>
</dbReference>
<dbReference type="Gene3D" id="3.90.370.10">
    <property type="entry name" value="Tissue inhibitor of metalloproteinase-1. Chain B, domain 1"/>
    <property type="match status" value="1"/>
</dbReference>
<dbReference type="InterPro" id="IPR001134">
    <property type="entry name" value="Netrin_domain"/>
</dbReference>
<dbReference type="InterPro" id="IPR001820">
    <property type="entry name" value="TIMP"/>
</dbReference>
<dbReference type="InterPro" id="IPR008993">
    <property type="entry name" value="TIMP-like_OB-fold"/>
</dbReference>
<dbReference type="InterPro" id="IPR027465">
    <property type="entry name" value="TIMP_C"/>
</dbReference>
<dbReference type="InterPro" id="IPR030490">
    <property type="entry name" value="TIMP_CS"/>
</dbReference>
<dbReference type="PANTHER" id="PTHR11844">
    <property type="entry name" value="METALLOPROTEASE INHIBITOR"/>
    <property type="match status" value="1"/>
</dbReference>
<dbReference type="PANTHER" id="PTHR11844:SF22">
    <property type="entry name" value="METALLOPROTEINASE INHIBITOR 3"/>
    <property type="match status" value="1"/>
</dbReference>
<dbReference type="Pfam" id="PF00965">
    <property type="entry name" value="TIMP"/>
    <property type="match status" value="1"/>
</dbReference>
<dbReference type="SMART" id="SM00206">
    <property type="entry name" value="NTR"/>
    <property type="match status" value="1"/>
</dbReference>
<dbReference type="SUPFAM" id="SSF50242">
    <property type="entry name" value="TIMP-like"/>
    <property type="match status" value="1"/>
</dbReference>
<dbReference type="PROSITE" id="PS50189">
    <property type="entry name" value="NTR"/>
    <property type="match status" value="1"/>
</dbReference>
<dbReference type="PROSITE" id="PS00288">
    <property type="entry name" value="TIMP"/>
    <property type="match status" value="1"/>
</dbReference>
<evidence type="ECO:0000250" key="1"/>
<evidence type="ECO:0000250" key="2">
    <source>
        <dbReference type="UniProtKB" id="P16035"/>
    </source>
</evidence>
<evidence type="ECO:0000255" key="3">
    <source>
        <dbReference type="PROSITE-ProRule" id="PRU00295"/>
    </source>
</evidence>
<evidence type="ECO:0000305" key="4"/>
<gene>
    <name type="primary">timp3</name>
</gene>